<feature type="chain" id="PRO_0000048769" description="Protein SOX-19">
    <location>
        <begin position="1" status="less than"/>
        <end position="55" status="greater than"/>
    </location>
</feature>
<feature type="DNA-binding region" description="HMG box" evidence="1">
    <location>
        <begin position="1" status="less than"/>
        <end position="55" status="greater than"/>
    </location>
</feature>
<feature type="non-terminal residue">
    <location>
        <position position="1"/>
    </location>
</feature>
<feature type="non-terminal residue">
    <location>
        <position position="55"/>
    </location>
</feature>
<sequence>MVWSQIERRKIMEQWPDMHNAEISKRLGKRWKLLPDYEKIPFIKEAERLRLKHMA</sequence>
<proteinExistence type="evidence at transcript level"/>
<gene>
    <name type="primary">Sox19</name>
</gene>
<keyword id="KW-0238">DNA-binding</keyword>
<keyword id="KW-0539">Nucleus</keyword>
<keyword id="KW-1185">Reference proteome</keyword>
<dbReference type="EMBL" id="X98368">
    <property type="protein sequence ID" value="CAA67014.1"/>
    <property type="molecule type" value="mRNA"/>
</dbReference>
<dbReference type="SMR" id="Q62249"/>
<dbReference type="AGR" id="MGI:1097162"/>
<dbReference type="MGI" id="MGI:1097162">
    <property type="gene designation" value="Sox19"/>
</dbReference>
<dbReference type="InParanoid" id="Q62249"/>
<dbReference type="Proteomes" id="UP000000589">
    <property type="component" value="Unplaced"/>
</dbReference>
<dbReference type="RNAct" id="Q62249">
    <property type="molecule type" value="protein"/>
</dbReference>
<dbReference type="GO" id="GO:0005634">
    <property type="term" value="C:nucleus"/>
    <property type="evidence" value="ECO:0007669"/>
    <property type="project" value="UniProtKB-SubCell"/>
</dbReference>
<dbReference type="GO" id="GO:0003677">
    <property type="term" value="F:DNA binding"/>
    <property type="evidence" value="ECO:0007669"/>
    <property type="project" value="UniProtKB-KW"/>
</dbReference>
<dbReference type="Gene3D" id="1.10.30.10">
    <property type="entry name" value="High mobility group box domain"/>
    <property type="match status" value="1"/>
</dbReference>
<dbReference type="InterPro" id="IPR009071">
    <property type="entry name" value="HMG_box_dom"/>
</dbReference>
<dbReference type="InterPro" id="IPR036910">
    <property type="entry name" value="HMG_box_dom_sf"/>
</dbReference>
<dbReference type="InterPro" id="IPR050140">
    <property type="entry name" value="SRY-related_HMG-box_TF-like"/>
</dbReference>
<dbReference type="PANTHER" id="PTHR10270">
    <property type="entry name" value="SOX TRANSCRIPTION FACTOR"/>
    <property type="match status" value="1"/>
</dbReference>
<dbReference type="PANTHER" id="PTHR10270:SF295">
    <property type="entry name" value="TRANSCRIPTION FACTOR SOX"/>
    <property type="match status" value="1"/>
</dbReference>
<dbReference type="Pfam" id="PF00505">
    <property type="entry name" value="HMG_box"/>
    <property type="match status" value="1"/>
</dbReference>
<dbReference type="SMART" id="SM00398">
    <property type="entry name" value="HMG"/>
    <property type="match status" value="1"/>
</dbReference>
<dbReference type="SUPFAM" id="SSF47095">
    <property type="entry name" value="HMG-box"/>
    <property type="match status" value="1"/>
</dbReference>
<dbReference type="PROSITE" id="PS50118">
    <property type="entry name" value="HMG_BOX_2"/>
    <property type="match status" value="1"/>
</dbReference>
<protein>
    <recommendedName>
        <fullName>Protein SOX-19</fullName>
    </recommendedName>
</protein>
<organism>
    <name type="scientific">Mus musculus</name>
    <name type="common">Mouse</name>
    <dbReference type="NCBI Taxonomy" id="10090"/>
    <lineage>
        <taxon>Eukaryota</taxon>
        <taxon>Metazoa</taxon>
        <taxon>Chordata</taxon>
        <taxon>Craniata</taxon>
        <taxon>Vertebrata</taxon>
        <taxon>Euteleostomi</taxon>
        <taxon>Mammalia</taxon>
        <taxon>Eutheria</taxon>
        <taxon>Euarchontoglires</taxon>
        <taxon>Glires</taxon>
        <taxon>Rodentia</taxon>
        <taxon>Myomorpha</taxon>
        <taxon>Muroidea</taxon>
        <taxon>Muridae</taxon>
        <taxon>Murinae</taxon>
        <taxon>Mus</taxon>
        <taxon>Mus</taxon>
    </lineage>
</organism>
<evidence type="ECO:0000255" key="1">
    <source>
        <dbReference type="PROSITE-ProRule" id="PRU00267"/>
    </source>
</evidence>
<name>SOX19_MOUSE</name>
<reference key="1">
    <citation type="submission" date="1995-12" db="EMBL/GenBank/DDBJ databases">
        <authorList>
            <person name="Lim F.L."/>
            <person name="Boam D.S.W."/>
        </authorList>
    </citation>
    <scope>NUCLEOTIDE SEQUENCE [MRNA]</scope>
    <source>
        <tissue>Pancreatic islet</tissue>
    </source>
</reference>
<accession>Q62249</accession>
<comment type="subcellular location">
    <subcellularLocation>
        <location evidence="1">Nucleus</location>
    </subcellularLocation>
</comment>